<accession>Q9KQ28</accession>
<dbReference type="EMBL" id="AE003852">
    <property type="protein sequence ID" value="AAF95321.1"/>
    <property type="molecule type" value="Genomic_DNA"/>
</dbReference>
<dbReference type="PIR" id="G82108">
    <property type="entry name" value="G82108"/>
</dbReference>
<dbReference type="RefSeq" id="NP_231807.1">
    <property type="nucleotide sequence ID" value="NC_002505.1"/>
</dbReference>
<dbReference type="RefSeq" id="WP_000933144.1">
    <property type="nucleotide sequence ID" value="NZ_LT906614.1"/>
</dbReference>
<dbReference type="SMR" id="Q9KQ28"/>
<dbReference type="STRING" id="243277.VC_2176"/>
<dbReference type="DNASU" id="2613312"/>
<dbReference type="EnsemblBacteria" id="AAF95321">
    <property type="protein sequence ID" value="AAF95321"/>
    <property type="gene ID" value="VC_2176"/>
</dbReference>
<dbReference type="KEGG" id="vch:VC_2176"/>
<dbReference type="PATRIC" id="fig|243277.26.peg.2074"/>
<dbReference type="eggNOG" id="COG2912">
    <property type="taxonomic scope" value="Bacteria"/>
</dbReference>
<dbReference type="HOGENOM" id="CLU_063810_0_0_6"/>
<dbReference type="Proteomes" id="UP000000584">
    <property type="component" value="Chromosome 1"/>
</dbReference>
<dbReference type="Gene3D" id="1.25.40.10">
    <property type="entry name" value="Tetratricopeptide repeat domain"/>
    <property type="match status" value="1"/>
</dbReference>
<dbReference type="InterPro" id="IPR032698">
    <property type="entry name" value="SirB1_N"/>
</dbReference>
<dbReference type="InterPro" id="IPR011990">
    <property type="entry name" value="TPR-like_helical_dom_sf"/>
</dbReference>
<dbReference type="PANTHER" id="PTHR31350:SF21">
    <property type="entry name" value="F-BOX ONLY PROTEIN 21"/>
    <property type="match status" value="1"/>
</dbReference>
<dbReference type="PANTHER" id="PTHR31350">
    <property type="entry name" value="SI:DKEY-261L7.2"/>
    <property type="match status" value="1"/>
</dbReference>
<dbReference type="Pfam" id="PF13371">
    <property type="entry name" value="TPR_9"/>
    <property type="match status" value="1"/>
</dbReference>
<dbReference type="Pfam" id="PF13369">
    <property type="entry name" value="Transglut_core2"/>
    <property type="match status" value="1"/>
</dbReference>
<dbReference type="SUPFAM" id="SSF48452">
    <property type="entry name" value="TPR-like"/>
    <property type="match status" value="1"/>
</dbReference>
<name>Y2176_VIBCH</name>
<sequence>MLNLCDEDFDAMELVEGALALNKAINPETQLEWAHIELARLLKEAELALVHERDEKARFEAFLRLFYQEWGFSGDREAYFDSRNAFIDQVLQRRKGIPVSLGSLLLYLGHKLGFPLNGISFPTQFLLSLNWSGERPIYLNPFNGEIVSQHTLQAWLVGHKGPLAKLKPQHLQSVDNPTIIGRWLALLKSALLREERYTLALRCTDLALTFVPDDPYEIRDRGFIYQQLQCHQIAISDYQYFIEHCPNDPAAELLKTQVNALSHDSQVTLH</sequence>
<proteinExistence type="inferred from homology"/>
<feature type="chain" id="PRO_0000202387" description="UPF0162 protein VC_2176">
    <location>
        <begin position="1"/>
        <end position="270"/>
    </location>
</feature>
<comment type="similarity">
    <text evidence="1">Belongs to the UPF0162 family.</text>
</comment>
<gene>
    <name type="ordered locus">VC_2176</name>
</gene>
<evidence type="ECO:0000305" key="1"/>
<organism>
    <name type="scientific">Vibrio cholerae serotype O1 (strain ATCC 39315 / El Tor Inaba N16961)</name>
    <dbReference type="NCBI Taxonomy" id="243277"/>
    <lineage>
        <taxon>Bacteria</taxon>
        <taxon>Pseudomonadati</taxon>
        <taxon>Pseudomonadota</taxon>
        <taxon>Gammaproteobacteria</taxon>
        <taxon>Vibrionales</taxon>
        <taxon>Vibrionaceae</taxon>
        <taxon>Vibrio</taxon>
    </lineage>
</organism>
<keyword id="KW-1185">Reference proteome</keyword>
<protein>
    <recommendedName>
        <fullName>UPF0162 protein VC_2176</fullName>
    </recommendedName>
</protein>
<reference key="1">
    <citation type="journal article" date="2000" name="Nature">
        <title>DNA sequence of both chromosomes of the cholera pathogen Vibrio cholerae.</title>
        <authorList>
            <person name="Heidelberg J.F."/>
            <person name="Eisen J.A."/>
            <person name="Nelson W.C."/>
            <person name="Clayton R.A."/>
            <person name="Gwinn M.L."/>
            <person name="Dodson R.J."/>
            <person name="Haft D.H."/>
            <person name="Hickey E.K."/>
            <person name="Peterson J.D."/>
            <person name="Umayam L.A."/>
            <person name="Gill S.R."/>
            <person name="Nelson K.E."/>
            <person name="Read T.D."/>
            <person name="Tettelin H."/>
            <person name="Richardson D.L."/>
            <person name="Ermolaeva M.D."/>
            <person name="Vamathevan J.J."/>
            <person name="Bass S."/>
            <person name="Qin H."/>
            <person name="Dragoi I."/>
            <person name="Sellers P."/>
            <person name="McDonald L.A."/>
            <person name="Utterback T.R."/>
            <person name="Fleischmann R.D."/>
            <person name="Nierman W.C."/>
            <person name="White O."/>
            <person name="Salzberg S.L."/>
            <person name="Smith H.O."/>
            <person name="Colwell R.R."/>
            <person name="Mekalanos J.J."/>
            <person name="Venter J.C."/>
            <person name="Fraser C.M."/>
        </authorList>
    </citation>
    <scope>NUCLEOTIDE SEQUENCE [LARGE SCALE GENOMIC DNA]</scope>
    <source>
        <strain>ATCC 39315 / El Tor Inaba N16961</strain>
    </source>
</reference>